<feature type="signal peptide" evidence="2">
    <location>
        <begin position="1"/>
        <end position="32"/>
    </location>
</feature>
<feature type="chain" id="PRO_0000036061" description="Ecdysteroid UDP-glucosyltransferase">
    <location>
        <begin position="33"/>
        <end position="528"/>
    </location>
</feature>
<gene>
    <name type="primary">EGT</name>
    <name type="synonym">UGT21A5</name>
</gene>
<reference key="1">
    <citation type="journal article" date="1996" name="J. Gen. Virol.">
        <title>Characterization of the ecdysteroid UDP-glucosyltransferase gene from Mamestra brassicae nucleopolyhedrovirus.</title>
        <authorList>
            <person name="Clarke E.E."/>
            <person name="Tristem M."/>
            <person name="Cory J.S."/>
            <person name="O'Reilly D.R."/>
        </authorList>
    </citation>
    <scope>NUCLEOTIDE SEQUENCE [GENOMIC DNA]</scope>
    <source>
        <strain>Oxford</strain>
    </source>
</reference>
<accession>Q83140</accession>
<protein>
    <recommendedName>
        <fullName>Ecdysteroid UDP-glucosyltransferase</fullName>
        <ecNumber>2.4.1.-</ecNumber>
    </recommendedName>
</protein>
<organism>
    <name type="scientific">Mamestra brassicae nuclear polyhedrosis virus</name>
    <name type="common">MbNPV</name>
    <dbReference type="NCBI Taxonomy" id="78219"/>
    <lineage>
        <taxon>Viruses</taxon>
        <taxon>Viruses incertae sedis</taxon>
        <taxon>Naldaviricetes</taxon>
        <taxon>Lefavirales</taxon>
        <taxon>Baculoviridae</taxon>
        <taxon>Alphabaculovirus</taxon>
        <taxon>Alphabaculovirus mabrassicae</taxon>
    </lineage>
</organism>
<proteinExistence type="inferred from homology"/>
<dbReference type="EC" id="2.4.1.-"/>
<dbReference type="EMBL" id="U41999">
    <property type="protein sequence ID" value="AAB03658.1"/>
    <property type="molecule type" value="Genomic_DNA"/>
</dbReference>
<dbReference type="SMR" id="Q83140"/>
<dbReference type="CAZy" id="GT1">
    <property type="family name" value="Glycosyltransferase Family 1"/>
</dbReference>
<dbReference type="GO" id="GO:0008194">
    <property type="term" value="F:UDP-glycosyltransferase activity"/>
    <property type="evidence" value="ECO:0007669"/>
    <property type="project" value="InterPro"/>
</dbReference>
<dbReference type="CDD" id="cd03784">
    <property type="entry name" value="GT1_Gtf-like"/>
    <property type="match status" value="1"/>
</dbReference>
<dbReference type="FunFam" id="3.40.50.2000:FF:000050">
    <property type="entry name" value="UDP-glucuronosyltransferase"/>
    <property type="match status" value="1"/>
</dbReference>
<dbReference type="Gene3D" id="3.40.50.2000">
    <property type="entry name" value="Glycogen Phosphorylase B"/>
    <property type="match status" value="2"/>
</dbReference>
<dbReference type="InterPro" id="IPR016224">
    <property type="entry name" value="Ecdysteroid_UDP-Glc_Trfase"/>
</dbReference>
<dbReference type="InterPro" id="IPR050271">
    <property type="entry name" value="UDP-glycosyltransferase"/>
</dbReference>
<dbReference type="InterPro" id="IPR002213">
    <property type="entry name" value="UDP_glucos_trans"/>
</dbReference>
<dbReference type="InterPro" id="IPR035595">
    <property type="entry name" value="UDP_glycos_trans_CS"/>
</dbReference>
<dbReference type="PANTHER" id="PTHR48043">
    <property type="entry name" value="EG:EG0003.4 PROTEIN-RELATED"/>
    <property type="match status" value="1"/>
</dbReference>
<dbReference type="PANTHER" id="PTHR48043:SF159">
    <property type="entry name" value="EG:EG0003.4 PROTEIN-RELATED"/>
    <property type="match status" value="1"/>
</dbReference>
<dbReference type="Pfam" id="PF00201">
    <property type="entry name" value="UDPGT"/>
    <property type="match status" value="1"/>
</dbReference>
<dbReference type="PIRSF" id="PIRSF000476">
    <property type="entry name" value="Ecdystd_UDP_glucosyltfrase"/>
    <property type="match status" value="1"/>
</dbReference>
<dbReference type="SUPFAM" id="SSF53756">
    <property type="entry name" value="UDP-Glycosyltransferase/glycogen phosphorylase"/>
    <property type="match status" value="1"/>
</dbReference>
<dbReference type="PROSITE" id="PS00375">
    <property type="entry name" value="UDPGT"/>
    <property type="match status" value="1"/>
</dbReference>
<organismHost>
    <name type="scientific">Lepidoptera</name>
    <name type="common">butterflies and moths</name>
    <dbReference type="NCBI Taxonomy" id="7088"/>
</organismHost>
<comment type="function">
    <text evidence="1">Catalyzes the transfer of glucose from UDP-glucose to ecdysteroids which are insect molting hormones. Expression of egt interferes with normal insect development and block molting (By similarity).</text>
</comment>
<comment type="similarity">
    <text evidence="3">Belongs to the UDP-glycosyltransferase family.</text>
</comment>
<sequence length="528" mass="61013">MGHLHIVHWRLTMNGAIAALFLCLVMVHQQHAVRILAVFPTPAYSHHSVFKVYIEALAERGHDVVVIKSTDRINYANRNGLRGNVSEIDASLSQEYYGRLMRHAGVFRKRGIVADSSTVTAHNYMGLVRMMSDQFDLPIVKSFIEEAHKHKFDLLITEAYIDYPLVFSHLFGDLPVVQISSGYAVAENFETMGAVSRHPVYYPNLWRDKFSGLNVWKQSMKCTLSWRYRMNLVNWPDEQNALLKRQFGESTPTIQELRNRVELLFVNTHAIFDNNRPVPPSVQYLGALHLHDKRPDSMYGMVREFLDNATTGAIYVSFGSAISSEDMEPEFIEMLLRVFEKLPYSILWKYDGYMNRMPANVFVQSWFEQYNLLHHKNVRAFVTQGGVQSTDEAVEAIVPMVGMPMMGDQAYNMNKIVELGLGKVVDTVRVNAEQLIEAIVDVAESPKYRKRLRELRHMIHHQPMTPLQKAVWYTEHVIESRRRVVPTMLKTRAANVNYSDYIMSYVFVPFIMFTVMNHLRQLLKMNMV</sequence>
<keyword id="KW-0328">Glycosyltransferase</keyword>
<keyword id="KW-0732">Signal</keyword>
<keyword id="KW-0808">Transferase</keyword>
<name>UDPE_NPVMB</name>
<evidence type="ECO:0000250" key="1"/>
<evidence type="ECO:0000255" key="2"/>
<evidence type="ECO:0000305" key="3"/>